<reference key="1">
    <citation type="journal article" date="2011" name="J. Bacteriol.">
        <title>Comparative genomics of 28 Salmonella enterica isolates: evidence for CRISPR-mediated adaptive sublineage evolution.</title>
        <authorList>
            <person name="Fricke W.F."/>
            <person name="Mammel M.K."/>
            <person name="McDermott P.F."/>
            <person name="Tartera C."/>
            <person name="White D.G."/>
            <person name="Leclerc J.E."/>
            <person name="Ravel J."/>
            <person name="Cebula T.A."/>
        </authorList>
    </citation>
    <scope>NUCLEOTIDE SEQUENCE [LARGE SCALE GENOMIC DNA]</scope>
    <source>
        <strain>CT_02021853</strain>
    </source>
</reference>
<keyword id="KW-0067">ATP-binding</keyword>
<keyword id="KW-0173">Coenzyme A biosynthesis</keyword>
<keyword id="KW-0963">Cytoplasm</keyword>
<keyword id="KW-0460">Magnesium</keyword>
<keyword id="KW-0547">Nucleotide-binding</keyword>
<keyword id="KW-0548">Nucleotidyltransferase</keyword>
<keyword id="KW-0808">Transferase</keyword>
<evidence type="ECO:0000255" key="1">
    <source>
        <dbReference type="HAMAP-Rule" id="MF_00151"/>
    </source>
</evidence>
<gene>
    <name evidence="1" type="primary">coaD</name>
    <name type="ordered locus">SeD_A4112</name>
</gene>
<dbReference type="EC" id="2.7.7.3" evidence="1"/>
<dbReference type="EMBL" id="CP001144">
    <property type="protein sequence ID" value="ACH74195.1"/>
    <property type="molecule type" value="Genomic_DNA"/>
</dbReference>
<dbReference type="RefSeq" id="WP_001171884.1">
    <property type="nucleotide sequence ID" value="NC_011205.1"/>
</dbReference>
<dbReference type="SMR" id="B5FM58"/>
<dbReference type="KEGG" id="sed:SeD_A4112"/>
<dbReference type="HOGENOM" id="CLU_100149_0_1_6"/>
<dbReference type="UniPathway" id="UPA00241">
    <property type="reaction ID" value="UER00355"/>
</dbReference>
<dbReference type="Proteomes" id="UP000008322">
    <property type="component" value="Chromosome"/>
</dbReference>
<dbReference type="GO" id="GO:0005737">
    <property type="term" value="C:cytoplasm"/>
    <property type="evidence" value="ECO:0007669"/>
    <property type="project" value="UniProtKB-SubCell"/>
</dbReference>
<dbReference type="GO" id="GO:0005524">
    <property type="term" value="F:ATP binding"/>
    <property type="evidence" value="ECO:0007669"/>
    <property type="project" value="UniProtKB-KW"/>
</dbReference>
<dbReference type="GO" id="GO:0004595">
    <property type="term" value="F:pantetheine-phosphate adenylyltransferase activity"/>
    <property type="evidence" value="ECO:0007669"/>
    <property type="project" value="UniProtKB-UniRule"/>
</dbReference>
<dbReference type="GO" id="GO:0015937">
    <property type="term" value="P:coenzyme A biosynthetic process"/>
    <property type="evidence" value="ECO:0007669"/>
    <property type="project" value="UniProtKB-UniRule"/>
</dbReference>
<dbReference type="CDD" id="cd02163">
    <property type="entry name" value="PPAT"/>
    <property type="match status" value="1"/>
</dbReference>
<dbReference type="FunFam" id="3.40.50.620:FF:000012">
    <property type="entry name" value="Phosphopantetheine adenylyltransferase"/>
    <property type="match status" value="1"/>
</dbReference>
<dbReference type="Gene3D" id="3.40.50.620">
    <property type="entry name" value="HUPs"/>
    <property type="match status" value="1"/>
</dbReference>
<dbReference type="HAMAP" id="MF_00151">
    <property type="entry name" value="PPAT_bact"/>
    <property type="match status" value="1"/>
</dbReference>
<dbReference type="InterPro" id="IPR004821">
    <property type="entry name" value="Cyt_trans-like"/>
</dbReference>
<dbReference type="InterPro" id="IPR001980">
    <property type="entry name" value="PPAT"/>
</dbReference>
<dbReference type="InterPro" id="IPR014729">
    <property type="entry name" value="Rossmann-like_a/b/a_fold"/>
</dbReference>
<dbReference type="NCBIfam" id="TIGR01510">
    <property type="entry name" value="coaD_prev_kdtB"/>
    <property type="match status" value="1"/>
</dbReference>
<dbReference type="NCBIfam" id="TIGR00125">
    <property type="entry name" value="cyt_tran_rel"/>
    <property type="match status" value="1"/>
</dbReference>
<dbReference type="PANTHER" id="PTHR21342">
    <property type="entry name" value="PHOSPHOPANTETHEINE ADENYLYLTRANSFERASE"/>
    <property type="match status" value="1"/>
</dbReference>
<dbReference type="PANTHER" id="PTHR21342:SF1">
    <property type="entry name" value="PHOSPHOPANTETHEINE ADENYLYLTRANSFERASE"/>
    <property type="match status" value="1"/>
</dbReference>
<dbReference type="Pfam" id="PF01467">
    <property type="entry name" value="CTP_transf_like"/>
    <property type="match status" value="1"/>
</dbReference>
<dbReference type="PRINTS" id="PR01020">
    <property type="entry name" value="LPSBIOSNTHSS"/>
</dbReference>
<dbReference type="SUPFAM" id="SSF52374">
    <property type="entry name" value="Nucleotidylyl transferase"/>
    <property type="match status" value="1"/>
</dbReference>
<feature type="chain" id="PRO_1000096833" description="Phosphopantetheine adenylyltransferase">
    <location>
        <begin position="1"/>
        <end position="159"/>
    </location>
</feature>
<feature type="binding site" evidence="1">
    <location>
        <begin position="10"/>
        <end position="11"/>
    </location>
    <ligand>
        <name>ATP</name>
        <dbReference type="ChEBI" id="CHEBI:30616"/>
    </ligand>
</feature>
<feature type="binding site" evidence="1">
    <location>
        <position position="10"/>
    </location>
    <ligand>
        <name>substrate</name>
    </ligand>
</feature>
<feature type="binding site" evidence="1">
    <location>
        <position position="18"/>
    </location>
    <ligand>
        <name>ATP</name>
        <dbReference type="ChEBI" id="CHEBI:30616"/>
    </ligand>
</feature>
<feature type="binding site" evidence="1">
    <location>
        <position position="42"/>
    </location>
    <ligand>
        <name>substrate</name>
    </ligand>
</feature>
<feature type="binding site" evidence="1">
    <location>
        <position position="74"/>
    </location>
    <ligand>
        <name>substrate</name>
    </ligand>
</feature>
<feature type="binding site" evidence="1">
    <location>
        <position position="88"/>
    </location>
    <ligand>
        <name>substrate</name>
    </ligand>
</feature>
<feature type="binding site" evidence="1">
    <location>
        <begin position="89"/>
        <end position="91"/>
    </location>
    <ligand>
        <name>ATP</name>
        <dbReference type="ChEBI" id="CHEBI:30616"/>
    </ligand>
</feature>
<feature type="binding site" evidence="1">
    <location>
        <position position="99"/>
    </location>
    <ligand>
        <name>ATP</name>
        <dbReference type="ChEBI" id="CHEBI:30616"/>
    </ligand>
</feature>
<feature type="binding site" evidence="1">
    <location>
        <begin position="124"/>
        <end position="130"/>
    </location>
    <ligand>
        <name>ATP</name>
        <dbReference type="ChEBI" id="CHEBI:30616"/>
    </ligand>
</feature>
<feature type="site" description="Transition state stabilizer" evidence="1">
    <location>
        <position position="18"/>
    </location>
</feature>
<name>COAD_SALDC</name>
<protein>
    <recommendedName>
        <fullName evidence="1">Phosphopantetheine adenylyltransferase</fullName>
        <ecNumber evidence="1">2.7.7.3</ecNumber>
    </recommendedName>
    <alternativeName>
        <fullName evidence="1">Dephospho-CoA pyrophosphorylase</fullName>
    </alternativeName>
    <alternativeName>
        <fullName evidence="1">Pantetheine-phosphate adenylyltransferase</fullName>
        <shortName evidence="1">PPAT</shortName>
    </alternativeName>
</protein>
<comment type="function">
    <text evidence="1">Reversibly transfers an adenylyl group from ATP to 4'-phosphopantetheine, yielding dephospho-CoA (dPCoA) and pyrophosphate.</text>
</comment>
<comment type="catalytic activity">
    <reaction evidence="1">
        <text>(R)-4'-phosphopantetheine + ATP + H(+) = 3'-dephospho-CoA + diphosphate</text>
        <dbReference type="Rhea" id="RHEA:19801"/>
        <dbReference type="ChEBI" id="CHEBI:15378"/>
        <dbReference type="ChEBI" id="CHEBI:30616"/>
        <dbReference type="ChEBI" id="CHEBI:33019"/>
        <dbReference type="ChEBI" id="CHEBI:57328"/>
        <dbReference type="ChEBI" id="CHEBI:61723"/>
        <dbReference type="EC" id="2.7.7.3"/>
    </reaction>
</comment>
<comment type="cofactor">
    <cofactor evidence="1">
        <name>Mg(2+)</name>
        <dbReference type="ChEBI" id="CHEBI:18420"/>
    </cofactor>
</comment>
<comment type="pathway">
    <text evidence="1">Cofactor biosynthesis; coenzyme A biosynthesis; CoA from (R)-pantothenate: step 4/5.</text>
</comment>
<comment type="subunit">
    <text evidence="1">Homohexamer.</text>
</comment>
<comment type="subcellular location">
    <subcellularLocation>
        <location evidence="1">Cytoplasm</location>
    </subcellularLocation>
</comment>
<comment type="similarity">
    <text evidence="1">Belongs to the bacterial CoaD family.</text>
</comment>
<accession>B5FM58</accession>
<proteinExistence type="inferred from homology"/>
<organism>
    <name type="scientific">Salmonella dublin (strain CT_02021853)</name>
    <dbReference type="NCBI Taxonomy" id="439851"/>
    <lineage>
        <taxon>Bacteria</taxon>
        <taxon>Pseudomonadati</taxon>
        <taxon>Pseudomonadota</taxon>
        <taxon>Gammaproteobacteria</taxon>
        <taxon>Enterobacterales</taxon>
        <taxon>Enterobacteriaceae</taxon>
        <taxon>Salmonella</taxon>
    </lineage>
</organism>
<sequence>MQKRAIYPGTFDPITNGHLDIVTRATQMFDHVILAIAASPGKKPMFTLDERVALAQKATAHLGNVEVVGFSDLMANFARDRQANILIRGLRAVADFEYEMQLAHMNRHLMPQLESVFLMPSKEWSFISSSLVKEVARHQGDVTHFLPDNVHQALMDKLK</sequence>